<comment type="function">
    <text evidence="2">Involved in D-lactate, but not L-lactate catabolic process.</text>
</comment>
<comment type="catalytic activity">
    <reaction>
        <text>(R)-lactate + 2 Fe(III)-[cytochrome c] = 2 Fe(II)-[cytochrome c] + pyruvate + 2 H(+)</text>
        <dbReference type="Rhea" id="RHEA:13521"/>
        <dbReference type="Rhea" id="RHEA-COMP:10350"/>
        <dbReference type="Rhea" id="RHEA-COMP:14399"/>
        <dbReference type="ChEBI" id="CHEBI:15361"/>
        <dbReference type="ChEBI" id="CHEBI:15378"/>
        <dbReference type="ChEBI" id="CHEBI:16004"/>
        <dbReference type="ChEBI" id="CHEBI:29033"/>
        <dbReference type="ChEBI" id="CHEBI:29034"/>
        <dbReference type="EC" id="1.1.2.4"/>
    </reaction>
    <physiologicalReaction direction="left-to-right" evidence="2">
        <dbReference type="Rhea" id="RHEA:13522"/>
    </physiologicalReaction>
</comment>
<comment type="cofactor">
    <cofactor evidence="1">
        <name>FAD</name>
        <dbReference type="ChEBI" id="CHEBI:57692"/>
    </cofactor>
</comment>
<comment type="subunit">
    <text evidence="5">Interacts with CSRP3.</text>
</comment>
<comment type="subcellular location">
    <subcellularLocation>
        <location evidence="5">Mitochondrion</location>
    </subcellularLocation>
</comment>
<comment type="tissue specificity">
    <text evidence="5">Readily detected in liver and kidney, with a weaker signal observed in heart, skeletal muscle, stomach, brain, and lung.</text>
</comment>
<comment type="similarity">
    <text evidence="3">Belongs to the FAD-binding oxidoreductase/transferase type 4 family.</text>
</comment>
<comment type="sequence caution" evidence="6">
    <conflict type="frameshift">
        <sequence resource="EMBL-CDS" id="AAM50323"/>
    </conflict>
</comment>
<comment type="sequence caution" evidence="6">
    <conflict type="frameshift">
        <sequence resource="EMBL-CDS" id="BAC29917"/>
    </conflict>
</comment>
<sequence>MAMLLRVATQRLSPWRSFCSRGSQGGLSQDFVEALKAVVGSPHVSTASAVREQHGHDESMHRCQPPDAVVWPQNVDQVSRVASLCYNQGVPIIPFGTGTGVEGGVCAVQGGVCINLTHMDQITELNTEDFSVVVEPGVTRKALNTHLRDSGLWFPVDPGADASLCGMAATGASGTNAVRYGTMRDNVINLEVVLPDGRLLHTAGRGRHYRKSAAGYNLTGLFVGSEGTLGIITSTTLRLHPAPEATVAATCAFPSVQAAVDSTVQILQAAVPVARIEFLDDVMMDACNRHSKLNCPVAPTLFLEFHGSQQTLAEQLQRTEAITQDNGGSHFSWAKEAEKRNELWAARHNAWYAALALSPGSKAYSTDVCVPISRLPEILVETKEEIKASKLTGAIVGHVGDGNFHCILLVDPDDAEEQRRVKAFAENLGRRALALGGTCTGEHGIGLGKRQLLQEEVGPVGVETMRQLKNTLDPRGLMNPGKVL</sequence>
<feature type="transit peptide" description="Mitochondrion" evidence="3">
    <location>
        <begin position="1"/>
        <end position="52"/>
    </location>
</feature>
<feature type="chain" id="PRO_0000262953" description="Probable D-lactate dehydrogenase, mitochondrial">
    <location>
        <begin position="53"/>
        <end position="484"/>
    </location>
</feature>
<feature type="domain" description="FAD-binding PCMH-type" evidence="4">
    <location>
        <begin position="62"/>
        <end position="242"/>
    </location>
</feature>
<feature type="modified residue" description="N6-acetyllysine" evidence="11">
    <location>
        <position position="36"/>
    </location>
</feature>
<feature type="modified residue" description="N6-acetyllysine" evidence="11">
    <location>
        <position position="292"/>
    </location>
</feature>
<feature type="modified residue" description="N6-acetyllysine; alternate" evidence="11">
    <location>
        <position position="335"/>
    </location>
</feature>
<feature type="modified residue" description="N6-succinyllysine; alternate" evidence="12">
    <location>
        <position position="335"/>
    </location>
</feature>
<feature type="modified residue" description="N6-acetyllysine" evidence="11">
    <location>
        <position position="422"/>
    </location>
</feature>
<feature type="modified residue" description="N6-acetyllysine" evidence="11">
    <location>
        <position position="449"/>
    </location>
</feature>
<feature type="sequence conflict" description="In Ref. 2; BAC29917." evidence="6" ref="2">
    <original>D</original>
    <variation>H</variation>
    <location>
        <position position="413"/>
    </location>
</feature>
<feature type="helix" evidence="13">
    <location>
        <begin position="29"/>
        <end position="39"/>
    </location>
</feature>
<feature type="helix" evidence="13">
    <location>
        <begin position="41"/>
        <end position="43"/>
    </location>
</feature>
<feature type="helix" evidence="13">
    <location>
        <begin position="48"/>
        <end position="53"/>
    </location>
</feature>
<feature type="strand" evidence="13">
    <location>
        <begin position="58"/>
        <end position="61"/>
    </location>
</feature>
<feature type="strand" evidence="13">
    <location>
        <begin position="67"/>
        <end position="70"/>
    </location>
</feature>
<feature type="helix" evidence="13">
    <location>
        <begin position="75"/>
        <end position="87"/>
    </location>
</feature>
<feature type="strand" evidence="13">
    <location>
        <begin position="92"/>
        <end position="98"/>
    </location>
</feature>
<feature type="strand" evidence="13">
    <location>
        <begin position="112"/>
        <end position="115"/>
    </location>
</feature>
<feature type="strand" evidence="13">
    <location>
        <begin position="122"/>
        <end position="126"/>
    </location>
</feature>
<feature type="turn" evidence="13">
    <location>
        <begin position="127"/>
        <end position="130"/>
    </location>
</feature>
<feature type="strand" evidence="13">
    <location>
        <begin position="131"/>
        <end position="134"/>
    </location>
</feature>
<feature type="helix" evidence="13">
    <location>
        <begin position="140"/>
        <end position="146"/>
    </location>
</feature>
<feature type="turn" evidence="13">
    <location>
        <begin position="147"/>
        <end position="151"/>
    </location>
</feature>
<feature type="helix" evidence="13">
    <location>
        <begin position="164"/>
        <end position="170"/>
    </location>
</feature>
<feature type="helix" evidence="13">
    <location>
        <begin position="177"/>
        <end position="180"/>
    </location>
</feature>
<feature type="helix" evidence="13">
    <location>
        <begin position="183"/>
        <end position="186"/>
    </location>
</feature>
<feature type="strand" evidence="13">
    <location>
        <begin position="187"/>
        <end position="193"/>
    </location>
</feature>
<feature type="strand" evidence="13">
    <location>
        <begin position="199"/>
        <end position="201"/>
    </location>
</feature>
<feature type="strand" evidence="13">
    <location>
        <begin position="214"/>
        <end position="216"/>
    </location>
</feature>
<feature type="helix" evidence="13">
    <location>
        <begin position="219"/>
        <end position="222"/>
    </location>
</feature>
<feature type="strand" evidence="13">
    <location>
        <begin position="231"/>
        <end position="238"/>
    </location>
</feature>
<feature type="strand" evidence="13">
    <location>
        <begin position="244"/>
        <end position="252"/>
    </location>
</feature>
<feature type="helix" evidence="13">
    <location>
        <begin position="256"/>
        <end position="268"/>
    </location>
</feature>
<feature type="strand" evidence="13">
    <location>
        <begin position="274"/>
        <end position="279"/>
    </location>
</feature>
<feature type="helix" evidence="13">
    <location>
        <begin position="281"/>
        <end position="291"/>
    </location>
</feature>
<feature type="strand" evidence="13">
    <location>
        <begin position="297"/>
        <end position="307"/>
    </location>
</feature>
<feature type="helix" evidence="13">
    <location>
        <begin position="309"/>
        <end position="325"/>
    </location>
</feature>
<feature type="strand" evidence="13">
    <location>
        <begin position="332"/>
        <end position="334"/>
    </location>
</feature>
<feature type="helix" evidence="13">
    <location>
        <begin position="338"/>
        <end position="348"/>
    </location>
</feature>
<feature type="helix" evidence="13">
    <location>
        <begin position="350"/>
        <end position="356"/>
    </location>
</feature>
<feature type="strand" evidence="13">
    <location>
        <begin position="362"/>
        <end position="365"/>
    </location>
</feature>
<feature type="helix" evidence="13">
    <location>
        <begin position="372"/>
        <end position="374"/>
    </location>
</feature>
<feature type="helix" evidence="13">
    <location>
        <begin position="375"/>
        <end position="388"/>
    </location>
</feature>
<feature type="strand" evidence="14">
    <location>
        <begin position="389"/>
        <end position="391"/>
    </location>
</feature>
<feature type="strand" evidence="13">
    <location>
        <begin position="393"/>
        <end position="397"/>
    </location>
</feature>
<feature type="helix" evidence="13">
    <location>
        <begin position="399"/>
        <end position="401"/>
    </location>
</feature>
<feature type="strand" evidence="13">
    <location>
        <begin position="405"/>
        <end position="410"/>
    </location>
</feature>
<feature type="helix" evidence="13">
    <location>
        <begin position="415"/>
        <end position="434"/>
    </location>
</feature>
<feature type="strand" evidence="13">
    <location>
        <begin position="438"/>
        <end position="443"/>
    </location>
</feature>
<feature type="turn" evidence="13">
    <location>
        <begin position="446"/>
        <end position="448"/>
    </location>
</feature>
<feature type="helix" evidence="13">
    <location>
        <begin position="450"/>
        <end position="472"/>
    </location>
</feature>
<dbReference type="EC" id="1.1.2.4" evidence="2"/>
<dbReference type="EMBL" id="AY092768">
    <property type="protein sequence ID" value="AAM50323.1"/>
    <property type="status" value="ALT_FRAME"/>
    <property type="molecule type" value="mRNA"/>
</dbReference>
<dbReference type="EMBL" id="BC039155">
    <property type="protein sequence ID" value="AAH39155.1"/>
    <property type="molecule type" value="mRNA"/>
</dbReference>
<dbReference type="EMBL" id="BC055443">
    <property type="protein sequence ID" value="AAH55443.1"/>
    <property type="molecule type" value="mRNA"/>
</dbReference>
<dbReference type="EMBL" id="AK037996">
    <property type="protein sequence ID" value="BAC29917.1"/>
    <property type="status" value="ALT_FRAME"/>
    <property type="molecule type" value="mRNA"/>
</dbReference>
<dbReference type="CCDS" id="CCDS22677.1"/>
<dbReference type="RefSeq" id="NP_081846.3">
    <property type="nucleotide sequence ID" value="NM_027570.3"/>
</dbReference>
<dbReference type="PDB" id="8JDB">
    <property type="method" value="X-ray"/>
    <property type="resolution" value="1.75 A"/>
    <property type="chains" value="A=22-484"/>
</dbReference>
<dbReference type="PDB" id="8JDC">
    <property type="method" value="X-ray"/>
    <property type="resolution" value="1.70 A"/>
    <property type="chains" value="A=22-484"/>
</dbReference>
<dbReference type="PDB" id="8JDD">
    <property type="method" value="X-ray"/>
    <property type="resolution" value="1.55 A"/>
    <property type="chains" value="A=22-484"/>
</dbReference>
<dbReference type="PDB" id="8JDE">
    <property type="method" value="X-ray"/>
    <property type="resolution" value="1.73 A"/>
    <property type="chains" value="A=22-484"/>
</dbReference>
<dbReference type="PDB" id="8JDF">
    <property type="method" value="X-ray"/>
    <property type="resolution" value="1.69 A"/>
    <property type="chains" value="A=22-484"/>
</dbReference>
<dbReference type="PDB" id="8JDG">
    <property type="method" value="X-ray"/>
    <property type="resolution" value="1.31 A"/>
    <property type="chains" value="A=22-484"/>
</dbReference>
<dbReference type="PDB" id="8JDN">
    <property type="method" value="X-ray"/>
    <property type="resolution" value="1.56 A"/>
    <property type="chains" value="A=22-484"/>
</dbReference>
<dbReference type="PDB" id="8JDO">
    <property type="method" value="X-ray"/>
    <property type="resolution" value="1.72 A"/>
    <property type="chains" value="A=22-484"/>
</dbReference>
<dbReference type="PDB" id="8JDP">
    <property type="method" value="X-ray"/>
    <property type="resolution" value="1.60 A"/>
    <property type="chains" value="A=22-484"/>
</dbReference>
<dbReference type="PDB" id="8JDQ">
    <property type="method" value="X-ray"/>
    <property type="resolution" value="1.39 A"/>
    <property type="chains" value="A=22-484"/>
</dbReference>
<dbReference type="PDB" id="8JDR">
    <property type="method" value="X-ray"/>
    <property type="resolution" value="1.64 A"/>
    <property type="chains" value="A=22-484"/>
</dbReference>
<dbReference type="PDB" id="8JDS">
    <property type="method" value="X-ray"/>
    <property type="resolution" value="1.64 A"/>
    <property type="chains" value="A=22-484"/>
</dbReference>
<dbReference type="PDB" id="8JDT">
    <property type="method" value="X-ray"/>
    <property type="resolution" value="1.55 A"/>
    <property type="chains" value="A=22-484"/>
</dbReference>
<dbReference type="PDB" id="8JDU">
    <property type="method" value="X-ray"/>
    <property type="resolution" value="1.67 A"/>
    <property type="chains" value="A=22-484"/>
</dbReference>
<dbReference type="PDB" id="8JDV">
    <property type="method" value="X-ray"/>
    <property type="resolution" value="1.96 A"/>
    <property type="chains" value="A=22-484"/>
</dbReference>
<dbReference type="PDB" id="8JDX">
    <property type="method" value="X-ray"/>
    <property type="resolution" value="1.79 A"/>
    <property type="chains" value="A=22-484"/>
</dbReference>
<dbReference type="PDB" id="8JDY">
    <property type="method" value="X-ray"/>
    <property type="resolution" value="1.59 A"/>
    <property type="chains" value="A=22-484"/>
</dbReference>
<dbReference type="PDB" id="8JDZ">
    <property type="method" value="X-ray"/>
    <property type="resolution" value="1.56 A"/>
    <property type="chains" value="A=22-484"/>
</dbReference>
<dbReference type="PDBsum" id="8JDB"/>
<dbReference type="PDBsum" id="8JDC"/>
<dbReference type="PDBsum" id="8JDD"/>
<dbReference type="PDBsum" id="8JDE"/>
<dbReference type="PDBsum" id="8JDF"/>
<dbReference type="PDBsum" id="8JDG"/>
<dbReference type="PDBsum" id="8JDN"/>
<dbReference type="PDBsum" id="8JDO"/>
<dbReference type="PDBsum" id="8JDP"/>
<dbReference type="PDBsum" id="8JDQ"/>
<dbReference type="PDBsum" id="8JDR"/>
<dbReference type="PDBsum" id="8JDS"/>
<dbReference type="PDBsum" id="8JDT"/>
<dbReference type="PDBsum" id="8JDU"/>
<dbReference type="PDBsum" id="8JDV"/>
<dbReference type="PDBsum" id="8JDX"/>
<dbReference type="PDBsum" id="8JDY"/>
<dbReference type="PDBsum" id="8JDZ"/>
<dbReference type="SMR" id="Q7TNG8"/>
<dbReference type="FunCoup" id="Q7TNG8">
    <property type="interactions" value="748"/>
</dbReference>
<dbReference type="IntAct" id="Q7TNG8">
    <property type="interactions" value="1"/>
</dbReference>
<dbReference type="MINT" id="Q7TNG8"/>
<dbReference type="STRING" id="10090.ENSMUSP00000068086"/>
<dbReference type="GlyGen" id="Q7TNG8">
    <property type="glycosylation" value="1 site, 1 O-linked glycan (1 site)"/>
</dbReference>
<dbReference type="iPTMnet" id="Q7TNG8"/>
<dbReference type="PhosphoSitePlus" id="Q7TNG8"/>
<dbReference type="SwissPalm" id="Q7TNG8"/>
<dbReference type="jPOST" id="Q7TNG8"/>
<dbReference type="PaxDb" id="10090-ENSMUSP00000068086"/>
<dbReference type="PeptideAtlas" id="Q7TNG8"/>
<dbReference type="ProteomicsDB" id="252462"/>
<dbReference type="Antibodypedia" id="30293">
    <property type="antibodies" value="235 antibodies from 29 providers"/>
</dbReference>
<dbReference type="DNASU" id="52815"/>
<dbReference type="Ensembl" id="ENSMUST00000070004.4">
    <property type="protein sequence ID" value="ENSMUSP00000068086.4"/>
    <property type="gene ID" value="ENSMUSG00000031958.17"/>
</dbReference>
<dbReference type="GeneID" id="52815"/>
<dbReference type="KEGG" id="mmu:52815"/>
<dbReference type="UCSC" id="uc009nmn.1">
    <property type="organism name" value="mouse"/>
</dbReference>
<dbReference type="AGR" id="MGI:106428"/>
<dbReference type="CTD" id="197257"/>
<dbReference type="MGI" id="MGI:106428">
    <property type="gene designation" value="Ldhd"/>
</dbReference>
<dbReference type="VEuPathDB" id="HostDB:ENSMUSG00000031958"/>
<dbReference type="eggNOG" id="KOG1231">
    <property type="taxonomic scope" value="Eukaryota"/>
</dbReference>
<dbReference type="GeneTree" id="ENSGT00940000158705"/>
<dbReference type="HOGENOM" id="CLU_017779_3_0_1"/>
<dbReference type="InParanoid" id="Q7TNG8"/>
<dbReference type="OMA" id="GQGFEWA"/>
<dbReference type="OrthoDB" id="28813at9989"/>
<dbReference type="PhylomeDB" id="Q7TNG8"/>
<dbReference type="TreeFam" id="TF314122"/>
<dbReference type="Reactome" id="R-MMU-1268020">
    <property type="pathway name" value="Mitochondrial protein import"/>
</dbReference>
<dbReference type="Reactome" id="R-MMU-9837999">
    <property type="pathway name" value="Mitochondrial protein degradation"/>
</dbReference>
<dbReference type="BioGRID-ORCS" id="52815">
    <property type="hits" value="2 hits in 76 CRISPR screens"/>
</dbReference>
<dbReference type="ChiTaRS" id="Ldhd">
    <property type="organism name" value="mouse"/>
</dbReference>
<dbReference type="PRO" id="PR:Q7TNG8"/>
<dbReference type="Proteomes" id="UP000000589">
    <property type="component" value="Chromosome 8"/>
</dbReference>
<dbReference type="RNAct" id="Q7TNG8">
    <property type="molecule type" value="protein"/>
</dbReference>
<dbReference type="Bgee" id="ENSMUSG00000031958">
    <property type="expression patterns" value="Expressed in right kidney and 125 other cell types or tissues"/>
</dbReference>
<dbReference type="GO" id="GO:0005743">
    <property type="term" value="C:mitochondrial inner membrane"/>
    <property type="evidence" value="ECO:0007669"/>
    <property type="project" value="Ensembl"/>
</dbReference>
<dbReference type="GO" id="GO:0005739">
    <property type="term" value="C:mitochondrion"/>
    <property type="evidence" value="ECO:0000314"/>
    <property type="project" value="UniProtKB"/>
</dbReference>
<dbReference type="GO" id="GO:0004458">
    <property type="term" value="F:D-lactate dehydrogenase (cytochrome) activity"/>
    <property type="evidence" value="ECO:0007669"/>
    <property type="project" value="UniProtKB-EC"/>
</dbReference>
<dbReference type="GO" id="GO:0008720">
    <property type="term" value="F:D-lactate dehydrogenase activity"/>
    <property type="evidence" value="ECO:0000303"/>
    <property type="project" value="UniProtKB"/>
</dbReference>
<dbReference type="GO" id="GO:0071949">
    <property type="term" value="F:FAD binding"/>
    <property type="evidence" value="ECO:0007669"/>
    <property type="project" value="InterPro"/>
</dbReference>
<dbReference type="GO" id="GO:0006754">
    <property type="term" value="P:ATP biosynthetic process"/>
    <property type="evidence" value="ECO:0000303"/>
    <property type="project" value="UniProtKB"/>
</dbReference>
<dbReference type="GO" id="GO:1903457">
    <property type="term" value="P:lactate catabolic process"/>
    <property type="evidence" value="ECO:0000250"/>
    <property type="project" value="UniProtKB"/>
</dbReference>
<dbReference type="FunFam" id="1.10.45.10:FF:000001">
    <property type="entry name" value="D-lactate dehydrogenase mitochondrial"/>
    <property type="match status" value="1"/>
</dbReference>
<dbReference type="FunFam" id="3.30.70.2740:FF:000001">
    <property type="entry name" value="D-lactate dehydrogenase mitochondrial"/>
    <property type="match status" value="1"/>
</dbReference>
<dbReference type="FunFam" id="3.30.43.10:FF:000010">
    <property type="entry name" value="probable D-lactate dehydrogenase, mitochondrial"/>
    <property type="match status" value="1"/>
</dbReference>
<dbReference type="FunFam" id="3.30.465.10:FF:000030">
    <property type="entry name" value="probable D-lactate dehydrogenase, mitochondrial"/>
    <property type="match status" value="1"/>
</dbReference>
<dbReference type="Gene3D" id="3.30.465.10">
    <property type="match status" value="1"/>
</dbReference>
<dbReference type="Gene3D" id="3.30.70.2190">
    <property type="match status" value="1"/>
</dbReference>
<dbReference type="Gene3D" id="3.30.70.2740">
    <property type="match status" value="1"/>
</dbReference>
<dbReference type="Gene3D" id="3.30.43.10">
    <property type="entry name" value="Uridine Diphospho-n-acetylenolpyruvylglucosamine Reductase, domain 2"/>
    <property type="match status" value="1"/>
</dbReference>
<dbReference type="Gene3D" id="1.10.45.10">
    <property type="entry name" value="Vanillyl-alcohol Oxidase, Chain A, domain 4"/>
    <property type="match status" value="1"/>
</dbReference>
<dbReference type="InterPro" id="IPR004113">
    <property type="entry name" value="FAD-bd_oxidored_4_C"/>
</dbReference>
<dbReference type="InterPro" id="IPR016166">
    <property type="entry name" value="FAD-bd_PCMH"/>
</dbReference>
<dbReference type="InterPro" id="IPR036318">
    <property type="entry name" value="FAD-bd_PCMH-like_sf"/>
</dbReference>
<dbReference type="InterPro" id="IPR016167">
    <property type="entry name" value="FAD-bd_PCMH_sub1"/>
</dbReference>
<dbReference type="InterPro" id="IPR016169">
    <property type="entry name" value="FAD-bd_PCMH_sub2"/>
</dbReference>
<dbReference type="InterPro" id="IPR016164">
    <property type="entry name" value="FAD-linked_Oxase-like_C"/>
</dbReference>
<dbReference type="InterPro" id="IPR006094">
    <property type="entry name" value="Oxid_FAD_bind_N"/>
</dbReference>
<dbReference type="InterPro" id="IPR016171">
    <property type="entry name" value="Vanillyl_alc_oxidase_C-sub2"/>
</dbReference>
<dbReference type="PANTHER" id="PTHR11748">
    <property type="entry name" value="D-LACTATE DEHYDROGENASE"/>
    <property type="match status" value="1"/>
</dbReference>
<dbReference type="PANTHER" id="PTHR11748:SF111">
    <property type="entry name" value="D-LACTATE DEHYDROGENASE, MITOCHONDRIAL-RELATED"/>
    <property type="match status" value="1"/>
</dbReference>
<dbReference type="Pfam" id="PF02913">
    <property type="entry name" value="FAD-oxidase_C"/>
    <property type="match status" value="1"/>
</dbReference>
<dbReference type="Pfam" id="PF01565">
    <property type="entry name" value="FAD_binding_4"/>
    <property type="match status" value="1"/>
</dbReference>
<dbReference type="SUPFAM" id="SSF56176">
    <property type="entry name" value="FAD-binding/transporter-associated domain-like"/>
    <property type="match status" value="1"/>
</dbReference>
<dbReference type="SUPFAM" id="SSF55103">
    <property type="entry name" value="FAD-linked oxidases, C-terminal domain"/>
    <property type="match status" value="1"/>
</dbReference>
<dbReference type="PROSITE" id="PS51387">
    <property type="entry name" value="FAD_PCMH"/>
    <property type="match status" value="1"/>
</dbReference>
<gene>
    <name evidence="10" type="primary">Ldhd</name>
</gene>
<organism>
    <name type="scientific">Mus musculus</name>
    <name type="common">Mouse</name>
    <dbReference type="NCBI Taxonomy" id="10090"/>
    <lineage>
        <taxon>Eukaryota</taxon>
        <taxon>Metazoa</taxon>
        <taxon>Chordata</taxon>
        <taxon>Craniata</taxon>
        <taxon>Vertebrata</taxon>
        <taxon>Euteleostomi</taxon>
        <taxon>Mammalia</taxon>
        <taxon>Eutheria</taxon>
        <taxon>Euarchontoglires</taxon>
        <taxon>Glires</taxon>
        <taxon>Rodentia</taxon>
        <taxon>Myomorpha</taxon>
        <taxon>Muroidea</taxon>
        <taxon>Muridae</taxon>
        <taxon>Murinae</taxon>
        <taxon>Mus</taxon>
        <taxon>Mus</taxon>
    </lineage>
</organism>
<reference evidence="6 8" key="1">
    <citation type="journal article" date="2002" name="Biochem. Biophys. Res. Commun.">
        <title>Identification of putative mammalian D-lactate dehydrogenase enzymes.</title>
        <authorList>
            <person name="Flick M.J."/>
            <person name="Konieczny S.F."/>
        </authorList>
    </citation>
    <scope>NUCLEOTIDE SEQUENCE [MRNA]</scope>
    <scope>INTERACTION WITH CSRP3</scope>
    <scope>SUBCELLULAR LOCATION</scope>
    <scope>TISSUE SPECIFICITY</scope>
    <source>
        <strain evidence="8">129/Sv</strain>
    </source>
</reference>
<reference evidence="6 7" key="2">
    <citation type="journal article" date="2004" name="Genome Res.">
        <title>The status, quality, and expansion of the NIH full-length cDNA project: the Mammalian Gene Collection (MGC).</title>
        <authorList>
            <consortium name="The MGC Project Team"/>
        </authorList>
    </citation>
    <scope>NUCLEOTIDE SEQUENCE [LARGE SCALE MRNA]</scope>
    <source>
        <strain evidence="7">FVB/N</strain>
        <tissue evidence="7">Kidney</tissue>
    </source>
</reference>
<reference evidence="6 9" key="3">
    <citation type="journal article" date="2005" name="Science">
        <title>The transcriptional landscape of the mammalian genome.</title>
        <authorList>
            <person name="Carninci P."/>
            <person name="Kasukawa T."/>
            <person name="Katayama S."/>
            <person name="Gough J."/>
            <person name="Frith M.C."/>
            <person name="Maeda N."/>
            <person name="Oyama R."/>
            <person name="Ravasi T."/>
            <person name="Lenhard B."/>
            <person name="Wells C."/>
            <person name="Kodzius R."/>
            <person name="Shimokawa K."/>
            <person name="Bajic V.B."/>
            <person name="Brenner S.E."/>
            <person name="Batalov S."/>
            <person name="Forrest A.R."/>
            <person name="Zavolan M."/>
            <person name="Davis M.J."/>
            <person name="Wilming L.G."/>
            <person name="Aidinis V."/>
            <person name="Allen J.E."/>
            <person name="Ambesi-Impiombato A."/>
            <person name="Apweiler R."/>
            <person name="Aturaliya R.N."/>
            <person name="Bailey T.L."/>
            <person name="Bansal M."/>
            <person name="Baxter L."/>
            <person name="Beisel K.W."/>
            <person name="Bersano T."/>
            <person name="Bono H."/>
            <person name="Chalk A.M."/>
            <person name="Chiu K.P."/>
            <person name="Choudhary V."/>
            <person name="Christoffels A."/>
            <person name="Clutterbuck D.R."/>
            <person name="Crowe M.L."/>
            <person name="Dalla E."/>
            <person name="Dalrymple B.P."/>
            <person name="de Bono B."/>
            <person name="Della Gatta G."/>
            <person name="di Bernardo D."/>
            <person name="Down T."/>
            <person name="Engstrom P."/>
            <person name="Fagiolini M."/>
            <person name="Faulkner G."/>
            <person name="Fletcher C.F."/>
            <person name="Fukushima T."/>
            <person name="Furuno M."/>
            <person name="Futaki S."/>
            <person name="Gariboldi M."/>
            <person name="Georgii-Hemming P."/>
            <person name="Gingeras T.R."/>
            <person name="Gojobori T."/>
            <person name="Green R.E."/>
            <person name="Gustincich S."/>
            <person name="Harbers M."/>
            <person name="Hayashi Y."/>
            <person name="Hensch T.K."/>
            <person name="Hirokawa N."/>
            <person name="Hill D."/>
            <person name="Huminiecki L."/>
            <person name="Iacono M."/>
            <person name="Ikeo K."/>
            <person name="Iwama A."/>
            <person name="Ishikawa T."/>
            <person name="Jakt M."/>
            <person name="Kanapin A."/>
            <person name="Katoh M."/>
            <person name="Kawasawa Y."/>
            <person name="Kelso J."/>
            <person name="Kitamura H."/>
            <person name="Kitano H."/>
            <person name="Kollias G."/>
            <person name="Krishnan S.P."/>
            <person name="Kruger A."/>
            <person name="Kummerfeld S.K."/>
            <person name="Kurochkin I.V."/>
            <person name="Lareau L.F."/>
            <person name="Lazarevic D."/>
            <person name="Lipovich L."/>
            <person name="Liu J."/>
            <person name="Liuni S."/>
            <person name="McWilliam S."/>
            <person name="Madan Babu M."/>
            <person name="Madera M."/>
            <person name="Marchionni L."/>
            <person name="Matsuda H."/>
            <person name="Matsuzawa S."/>
            <person name="Miki H."/>
            <person name="Mignone F."/>
            <person name="Miyake S."/>
            <person name="Morris K."/>
            <person name="Mottagui-Tabar S."/>
            <person name="Mulder N."/>
            <person name="Nakano N."/>
            <person name="Nakauchi H."/>
            <person name="Ng P."/>
            <person name="Nilsson R."/>
            <person name="Nishiguchi S."/>
            <person name="Nishikawa S."/>
            <person name="Nori F."/>
            <person name="Ohara O."/>
            <person name="Okazaki Y."/>
            <person name="Orlando V."/>
            <person name="Pang K.C."/>
            <person name="Pavan W.J."/>
            <person name="Pavesi G."/>
            <person name="Pesole G."/>
            <person name="Petrovsky N."/>
            <person name="Piazza S."/>
            <person name="Reed J."/>
            <person name="Reid J.F."/>
            <person name="Ring B.Z."/>
            <person name="Ringwald M."/>
            <person name="Rost B."/>
            <person name="Ruan Y."/>
            <person name="Salzberg S.L."/>
            <person name="Sandelin A."/>
            <person name="Schneider C."/>
            <person name="Schoenbach C."/>
            <person name="Sekiguchi K."/>
            <person name="Semple C.A."/>
            <person name="Seno S."/>
            <person name="Sessa L."/>
            <person name="Sheng Y."/>
            <person name="Shibata Y."/>
            <person name="Shimada H."/>
            <person name="Shimada K."/>
            <person name="Silva D."/>
            <person name="Sinclair B."/>
            <person name="Sperling S."/>
            <person name="Stupka E."/>
            <person name="Sugiura K."/>
            <person name="Sultana R."/>
            <person name="Takenaka Y."/>
            <person name="Taki K."/>
            <person name="Tammoja K."/>
            <person name="Tan S.L."/>
            <person name="Tang S."/>
            <person name="Taylor M.S."/>
            <person name="Tegner J."/>
            <person name="Teichmann S.A."/>
            <person name="Ueda H.R."/>
            <person name="van Nimwegen E."/>
            <person name="Verardo R."/>
            <person name="Wei C.L."/>
            <person name="Yagi K."/>
            <person name="Yamanishi H."/>
            <person name="Zabarovsky E."/>
            <person name="Zhu S."/>
            <person name="Zimmer A."/>
            <person name="Hide W."/>
            <person name="Bult C."/>
            <person name="Grimmond S.M."/>
            <person name="Teasdale R.D."/>
            <person name="Liu E.T."/>
            <person name="Brusic V."/>
            <person name="Quackenbush J."/>
            <person name="Wahlestedt C."/>
            <person name="Mattick J.S."/>
            <person name="Hume D.A."/>
            <person name="Kai C."/>
            <person name="Sasaki D."/>
            <person name="Tomaru Y."/>
            <person name="Fukuda S."/>
            <person name="Kanamori-Katayama M."/>
            <person name="Suzuki M."/>
            <person name="Aoki J."/>
            <person name="Arakawa T."/>
            <person name="Iida J."/>
            <person name="Imamura K."/>
            <person name="Itoh M."/>
            <person name="Kato T."/>
            <person name="Kawaji H."/>
            <person name="Kawagashira N."/>
            <person name="Kawashima T."/>
            <person name="Kojima M."/>
            <person name="Kondo S."/>
            <person name="Konno H."/>
            <person name="Nakano K."/>
            <person name="Ninomiya N."/>
            <person name="Nishio T."/>
            <person name="Okada M."/>
            <person name="Plessy C."/>
            <person name="Shibata K."/>
            <person name="Shiraki T."/>
            <person name="Suzuki S."/>
            <person name="Tagami M."/>
            <person name="Waki K."/>
            <person name="Watahiki A."/>
            <person name="Okamura-Oho Y."/>
            <person name="Suzuki H."/>
            <person name="Kawai J."/>
            <person name="Hayashizaki Y."/>
        </authorList>
    </citation>
    <scope>NUCLEOTIDE SEQUENCE [LARGE SCALE MRNA] OF 286-430</scope>
    <source>
        <strain evidence="9">C57BL/6J</strain>
        <tissue evidence="9">Thymus</tissue>
    </source>
</reference>
<reference key="4">
    <citation type="journal article" date="2010" name="Cell">
        <title>A tissue-specific atlas of mouse protein phosphorylation and expression.</title>
        <authorList>
            <person name="Huttlin E.L."/>
            <person name="Jedrychowski M.P."/>
            <person name="Elias J.E."/>
            <person name="Goswami T."/>
            <person name="Rad R."/>
            <person name="Beausoleil S.A."/>
            <person name="Villen J."/>
            <person name="Haas W."/>
            <person name="Sowa M.E."/>
            <person name="Gygi S.P."/>
        </authorList>
    </citation>
    <scope>IDENTIFICATION BY MASS SPECTROMETRY [LARGE SCALE ANALYSIS]</scope>
    <source>
        <tissue>Brown adipose tissue</tissue>
        <tissue>Heart</tissue>
        <tissue>Kidney</tissue>
        <tissue>Liver</tissue>
    </source>
</reference>
<reference key="5">
    <citation type="journal article" date="2013" name="Mol. Cell">
        <title>SIRT5-mediated lysine desuccinylation impacts diverse metabolic pathways.</title>
        <authorList>
            <person name="Park J."/>
            <person name="Chen Y."/>
            <person name="Tishkoff D.X."/>
            <person name="Peng C."/>
            <person name="Tan M."/>
            <person name="Dai L."/>
            <person name="Xie Z."/>
            <person name="Zhang Y."/>
            <person name="Zwaans B.M."/>
            <person name="Skinner M.E."/>
            <person name="Lombard D.B."/>
            <person name="Zhao Y."/>
        </authorList>
    </citation>
    <scope>SUCCINYLATION [LARGE SCALE ANALYSIS] AT LYS-335</scope>
    <scope>IDENTIFICATION BY MASS SPECTROMETRY [LARGE SCALE ANALYSIS]</scope>
    <source>
        <tissue>Liver</tissue>
    </source>
</reference>
<reference key="6">
    <citation type="journal article" date="2013" name="Proc. Natl. Acad. Sci. U.S.A.">
        <title>Label-free quantitative proteomics of the lysine acetylome in mitochondria identifies substrates of SIRT3 in metabolic pathways.</title>
        <authorList>
            <person name="Rardin M.J."/>
            <person name="Newman J.C."/>
            <person name="Held J.M."/>
            <person name="Cusack M.P."/>
            <person name="Sorensen D.J."/>
            <person name="Li B."/>
            <person name="Schilling B."/>
            <person name="Mooney S.D."/>
            <person name="Kahn C.R."/>
            <person name="Verdin E."/>
            <person name="Gibson B.W."/>
        </authorList>
    </citation>
    <scope>ACETYLATION [LARGE SCALE ANALYSIS] AT LYS-36; LYS-292; LYS-335; LYS-422 AND LYS-449</scope>
    <scope>IDENTIFICATION BY MASS SPECTROMETRY [LARGE SCALE ANALYSIS]</scope>
    <source>
        <tissue>Liver</tissue>
    </source>
</reference>
<keyword id="KW-0002">3D-structure</keyword>
<keyword id="KW-0007">Acetylation</keyword>
<keyword id="KW-0274">FAD</keyword>
<keyword id="KW-0285">Flavoprotein</keyword>
<keyword id="KW-0496">Mitochondrion</keyword>
<keyword id="KW-0560">Oxidoreductase</keyword>
<keyword id="KW-1185">Reference proteome</keyword>
<keyword id="KW-0809">Transit peptide</keyword>
<proteinExistence type="evidence at protein level"/>
<accession>Q7TNG8</accession>
<accession>Q8BYU7</accession>
<accession>Q8CIV4</accession>
<protein>
    <recommendedName>
        <fullName>Probable D-lactate dehydrogenase, mitochondrial</fullName>
        <shortName>DLD</shortName>
        <shortName>Lactate dehydrogenase D</shortName>
        <ecNumber evidence="2">1.1.2.4</ecNumber>
    </recommendedName>
</protein>
<name>LDHD_MOUSE</name>
<evidence type="ECO:0000250" key="1">
    <source>
        <dbReference type="UniProtKB" id="P39976"/>
    </source>
</evidence>
<evidence type="ECO:0000250" key="2">
    <source>
        <dbReference type="UniProtKB" id="Q86WU2"/>
    </source>
</evidence>
<evidence type="ECO:0000255" key="3"/>
<evidence type="ECO:0000255" key="4">
    <source>
        <dbReference type="PROSITE-ProRule" id="PRU00718"/>
    </source>
</evidence>
<evidence type="ECO:0000269" key="5">
    <source>
    </source>
</evidence>
<evidence type="ECO:0000305" key="6"/>
<evidence type="ECO:0000312" key="7">
    <source>
        <dbReference type="EMBL" id="AAH39155.1"/>
    </source>
</evidence>
<evidence type="ECO:0000312" key="8">
    <source>
        <dbReference type="EMBL" id="AAM50323.1"/>
    </source>
</evidence>
<evidence type="ECO:0000312" key="9">
    <source>
        <dbReference type="EMBL" id="BAC29917.1"/>
    </source>
</evidence>
<evidence type="ECO:0000312" key="10">
    <source>
        <dbReference type="MGI" id="MGI:106428"/>
    </source>
</evidence>
<evidence type="ECO:0007744" key="11">
    <source>
    </source>
</evidence>
<evidence type="ECO:0007744" key="12">
    <source>
    </source>
</evidence>
<evidence type="ECO:0007829" key="13">
    <source>
        <dbReference type="PDB" id="8JDG"/>
    </source>
</evidence>
<evidence type="ECO:0007829" key="14">
    <source>
        <dbReference type="PDB" id="8JDS"/>
    </source>
</evidence>